<evidence type="ECO:0000250" key="1"/>
<evidence type="ECO:0000255" key="2">
    <source>
        <dbReference type="HAMAP-Rule" id="MF_01365"/>
    </source>
</evidence>
<evidence type="ECO:0000269" key="3">
    <source>
    </source>
</evidence>
<evidence type="ECO:0000305" key="4"/>
<evidence type="ECO:0007744" key="5">
    <source>
        <dbReference type="PDB" id="6HA1"/>
    </source>
</evidence>
<evidence type="ECO:0007744" key="6">
    <source>
        <dbReference type="PDB" id="6HA8"/>
    </source>
</evidence>
<evidence type="ECO:0007829" key="7">
    <source>
        <dbReference type="PDB" id="6TPQ"/>
    </source>
</evidence>
<evidence type="ECO:0007829" key="8">
    <source>
        <dbReference type="PDB" id="8S1P"/>
    </source>
</evidence>
<gene>
    <name evidence="2" type="primary">rplF</name>
    <name type="ordered locus">BSU01310</name>
</gene>
<sequence length="179" mass="19509">MSRVGKKLLEIPSDVTVTLNDNNTVAVKGPKGELTRTFHPDMEIKVEDNVLTVARPSDQKEHRALHGTTRSLLGNMVEGVSKGFERGLELVGVGYRASKSGNKLVLNVGYSHPVEIVPEEGIEIEVPSQTKVVVKGTDKERVGAIAANIRAVRSPEPYKGKGIRYEGEVVRRKEGKSAK</sequence>
<feature type="initiator methionine" description="Removed" evidence="1">
    <location>
        <position position="1"/>
    </location>
</feature>
<feature type="chain" id="PRO_0000131038" description="Large ribosomal subunit protein uL6">
    <location>
        <begin position="2"/>
        <end position="179"/>
    </location>
</feature>
<feature type="helix" evidence="8">
    <location>
        <begin position="3"/>
        <end position="6"/>
    </location>
</feature>
<feature type="strand" evidence="8">
    <location>
        <begin position="16"/>
        <end position="20"/>
    </location>
</feature>
<feature type="helix" evidence="8">
    <location>
        <begin position="21"/>
        <end position="23"/>
    </location>
</feature>
<feature type="strand" evidence="8">
    <location>
        <begin position="24"/>
        <end position="29"/>
    </location>
</feature>
<feature type="strand" evidence="8">
    <location>
        <begin position="32"/>
        <end position="37"/>
    </location>
</feature>
<feature type="strand" evidence="7">
    <location>
        <begin position="40"/>
        <end position="42"/>
    </location>
</feature>
<feature type="strand" evidence="8">
    <location>
        <begin position="43"/>
        <end position="47"/>
    </location>
</feature>
<feature type="strand" evidence="8">
    <location>
        <begin position="50"/>
        <end position="54"/>
    </location>
</feature>
<feature type="helix" evidence="8">
    <location>
        <begin position="60"/>
        <end position="81"/>
    </location>
</feature>
<feature type="strand" evidence="8">
    <location>
        <begin position="84"/>
        <end position="92"/>
    </location>
</feature>
<feature type="strand" evidence="8">
    <location>
        <begin position="96"/>
        <end position="100"/>
    </location>
</feature>
<feature type="strand" evidence="8">
    <location>
        <begin position="103"/>
        <end position="112"/>
    </location>
</feature>
<feature type="strand" evidence="8">
    <location>
        <begin position="114"/>
        <end position="116"/>
    </location>
</feature>
<feature type="strand" evidence="8">
    <location>
        <begin position="122"/>
        <end position="128"/>
    </location>
</feature>
<feature type="strand" evidence="8">
    <location>
        <begin position="131"/>
        <end position="137"/>
    </location>
</feature>
<feature type="helix" evidence="8">
    <location>
        <begin position="139"/>
        <end position="151"/>
    </location>
</feature>
<feature type="turn" evidence="8">
    <location>
        <begin position="157"/>
        <end position="159"/>
    </location>
</feature>
<feature type="strand" evidence="8">
    <location>
        <begin position="162"/>
        <end position="165"/>
    </location>
</feature>
<protein>
    <recommendedName>
        <fullName evidence="2">Large ribosomal subunit protein uL6</fullName>
    </recommendedName>
    <alternativeName>
        <fullName evidence="4">50S ribosomal protein L6</fullName>
    </alternativeName>
    <alternativeName>
        <fullName>BL10</fullName>
    </alternativeName>
</protein>
<dbReference type="EMBL" id="L47971">
    <property type="protein sequence ID" value="AAB06814.1"/>
    <property type="molecule type" value="Genomic_DNA"/>
</dbReference>
<dbReference type="EMBL" id="D64125">
    <property type="protein sequence ID" value="BAA10981.1"/>
    <property type="molecule type" value="Genomic_DNA"/>
</dbReference>
<dbReference type="EMBL" id="AL009126">
    <property type="protein sequence ID" value="CAB11907.1"/>
    <property type="molecule type" value="Genomic_DNA"/>
</dbReference>
<dbReference type="PIR" id="B69695">
    <property type="entry name" value="B69695"/>
</dbReference>
<dbReference type="RefSeq" id="NP_388012.1">
    <property type="nucleotide sequence ID" value="NC_000964.3"/>
</dbReference>
<dbReference type="RefSeq" id="WP_004399690.1">
    <property type="nucleotide sequence ID" value="NZ_OZ025638.1"/>
</dbReference>
<dbReference type="PDB" id="3J3V">
    <property type="method" value="EM"/>
    <property type="resolution" value="13.30 A"/>
    <property type="chains" value="G=1-179"/>
</dbReference>
<dbReference type="PDB" id="3J3W">
    <property type="method" value="EM"/>
    <property type="resolution" value="10.70 A"/>
    <property type="chains" value="G=1-179"/>
</dbReference>
<dbReference type="PDB" id="3J9W">
    <property type="method" value="EM"/>
    <property type="resolution" value="3.90 A"/>
    <property type="chains" value="BH=1-179"/>
</dbReference>
<dbReference type="PDB" id="5NJT">
    <property type="method" value="EM"/>
    <property type="resolution" value="3.80 A"/>
    <property type="chains" value="a=2-176"/>
</dbReference>
<dbReference type="PDB" id="6HA1">
    <property type="method" value="EM"/>
    <property type="resolution" value="3.10 A"/>
    <property type="chains" value="G=1-179"/>
</dbReference>
<dbReference type="PDB" id="6HA8">
    <property type="method" value="EM"/>
    <property type="resolution" value="3.50 A"/>
    <property type="chains" value="G=1-179"/>
</dbReference>
<dbReference type="PDB" id="6HTQ">
    <property type="method" value="EM"/>
    <property type="resolution" value="4.50 A"/>
    <property type="chains" value="G=2-176"/>
</dbReference>
<dbReference type="PDB" id="6PPK">
    <property type="method" value="EM"/>
    <property type="resolution" value="4.40 A"/>
    <property type="chains" value="G=1-179"/>
</dbReference>
<dbReference type="PDB" id="6TNN">
    <property type="method" value="EM"/>
    <property type="resolution" value="3.07 A"/>
    <property type="chains" value="a=1-179"/>
</dbReference>
<dbReference type="PDB" id="6TPQ">
    <property type="method" value="EM"/>
    <property type="resolution" value="3.07 A"/>
    <property type="chains" value="a=1-179"/>
</dbReference>
<dbReference type="PDB" id="7AQC">
    <property type="method" value="EM"/>
    <property type="resolution" value="2.99 A"/>
    <property type="chains" value="G=1-179"/>
</dbReference>
<dbReference type="PDB" id="7AQD">
    <property type="method" value="EM"/>
    <property type="resolution" value="3.10 A"/>
    <property type="chains" value="G=1-179"/>
</dbReference>
<dbReference type="PDB" id="7AS8">
    <property type="method" value="EM"/>
    <property type="resolution" value="2.90 A"/>
    <property type="chains" value="I=1-179"/>
</dbReference>
<dbReference type="PDB" id="7AS9">
    <property type="method" value="EM"/>
    <property type="resolution" value="3.50 A"/>
    <property type="chains" value="I=1-179"/>
</dbReference>
<dbReference type="PDB" id="7O5B">
    <property type="method" value="EM"/>
    <property type="resolution" value="3.33 A"/>
    <property type="chains" value="d=1-179"/>
</dbReference>
<dbReference type="PDB" id="7OPE">
    <property type="method" value="EM"/>
    <property type="resolution" value="3.20 A"/>
    <property type="chains" value="I=1-179"/>
</dbReference>
<dbReference type="PDB" id="7QGU">
    <property type="method" value="EM"/>
    <property type="resolution" value="4.75 A"/>
    <property type="chains" value="G=1-179"/>
</dbReference>
<dbReference type="PDB" id="7QH4">
    <property type="method" value="EM"/>
    <property type="resolution" value="5.45 A"/>
    <property type="chains" value="G=1-179"/>
</dbReference>
<dbReference type="PDB" id="7QV1">
    <property type="method" value="EM"/>
    <property type="resolution" value="3.50 A"/>
    <property type="chains" value="G=1-179"/>
</dbReference>
<dbReference type="PDB" id="7QV2">
    <property type="method" value="EM"/>
    <property type="resolution" value="3.50 A"/>
    <property type="chains" value="G=1-179"/>
</dbReference>
<dbReference type="PDB" id="7QV3">
    <property type="method" value="EM"/>
    <property type="resolution" value="5.14 A"/>
    <property type="chains" value="G=1-179"/>
</dbReference>
<dbReference type="PDB" id="8BUU">
    <property type="method" value="EM"/>
    <property type="resolution" value="2.90 A"/>
    <property type="chains" value="G=1-179"/>
</dbReference>
<dbReference type="PDB" id="8QCQ">
    <property type="method" value="EM"/>
    <property type="resolution" value="2.30 A"/>
    <property type="chains" value="G=1-179"/>
</dbReference>
<dbReference type="PDB" id="8QPP">
    <property type="method" value="EM"/>
    <property type="resolution" value="3.40 A"/>
    <property type="chains" value="d=2-176"/>
</dbReference>
<dbReference type="PDB" id="8R55">
    <property type="method" value="EM"/>
    <property type="resolution" value="3.57 A"/>
    <property type="chains" value="d=2-176"/>
</dbReference>
<dbReference type="PDB" id="8S1P">
    <property type="method" value="EM"/>
    <property type="resolution" value="1.96 A"/>
    <property type="chains" value="G=1-179"/>
</dbReference>
<dbReference type="PDB" id="8S1U">
    <property type="method" value="EM"/>
    <property type="resolution" value="3.40 A"/>
    <property type="chains" value="G=1-179"/>
</dbReference>
<dbReference type="PDB" id="9BS0">
    <property type="method" value="EM"/>
    <property type="resolution" value="3.30 A"/>
    <property type="chains" value="F=1-179"/>
</dbReference>
<dbReference type="PDB" id="9BSL">
    <property type="method" value="EM"/>
    <property type="resolution" value="3.10 A"/>
    <property type="chains" value="F=1-179"/>
</dbReference>
<dbReference type="PDB" id="9BSS">
    <property type="method" value="EM"/>
    <property type="resolution" value="3.10 A"/>
    <property type="chains" value="F=1-179"/>
</dbReference>
<dbReference type="PDBsum" id="3J3V"/>
<dbReference type="PDBsum" id="3J3W"/>
<dbReference type="PDBsum" id="3J9W"/>
<dbReference type="PDBsum" id="5NJT"/>
<dbReference type="PDBsum" id="6HA1"/>
<dbReference type="PDBsum" id="6HA8"/>
<dbReference type="PDBsum" id="6HTQ"/>
<dbReference type="PDBsum" id="6PPK"/>
<dbReference type="PDBsum" id="6TNN"/>
<dbReference type="PDBsum" id="6TPQ"/>
<dbReference type="PDBsum" id="7AQC"/>
<dbReference type="PDBsum" id="7AQD"/>
<dbReference type="PDBsum" id="7AS8"/>
<dbReference type="PDBsum" id="7AS9"/>
<dbReference type="PDBsum" id="7O5B"/>
<dbReference type="PDBsum" id="7OPE"/>
<dbReference type="PDBsum" id="7QGU"/>
<dbReference type="PDBsum" id="7QH4"/>
<dbReference type="PDBsum" id="7QV1"/>
<dbReference type="PDBsum" id="7QV2"/>
<dbReference type="PDBsum" id="7QV3"/>
<dbReference type="PDBsum" id="8BUU"/>
<dbReference type="PDBsum" id="8QCQ"/>
<dbReference type="PDBsum" id="8QPP"/>
<dbReference type="PDBsum" id="8R55"/>
<dbReference type="PDBsum" id="8S1P"/>
<dbReference type="PDBsum" id="8S1U"/>
<dbReference type="PDBsum" id="9BS0"/>
<dbReference type="PDBsum" id="9BSL"/>
<dbReference type="PDBsum" id="9BSS"/>
<dbReference type="EMDB" id="EMD-0176"/>
<dbReference type="EMDB" id="EMD-0177"/>
<dbReference type="EMDB" id="EMD-0270"/>
<dbReference type="EMDB" id="EMD-10535"/>
<dbReference type="EMDB" id="EMD-10543"/>
<dbReference type="EMDB" id="EMD-11862"/>
<dbReference type="EMDB" id="EMD-11864"/>
<dbReference type="EMDB" id="EMD-11889"/>
<dbReference type="EMDB" id="EMD-11890"/>
<dbReference type="EMDB" id="EMD-12734"/>
<dbReference type="EMDB" id="EMD-13017"/>
<dbReference type="EMDB" id="EMD-14157"/>
<dbReference type="EMDB" id="EMD-14158"/>
<dbReference type="EMDB" id="EMD-14159"/>
<dbReference type="EMDB" id="EMD-16246"/>
<dbReference type="EMDB" id="EMD-18332"/>
<dbReference type="EMDB" id="EMD-19638"/>
<dbReference type="EMDB" id="EMD-19641"/>
<dbReference type="EMDB" id="EMD-3656"/>
<dbReference type="EMDB" id="EMD-44849"/>
<dbReference type="EMDB" id="EMD-44869"/>
<dbReference type="EMDB" id="EMD-44871"/>
<dbReference type="SMR" id="P46898"/>
<dbReference type="FunCoup" id="P46898">
    <property type="interactions" value="689"/>
</dbReference>
<dbReference type="IntAct" id="P46898">
    <property type="interactions" value="2"/>
</dbReference>
<dbReference type="STRING" id="224308.BSU01310"/>
<dbReference type="jPOST" id="P46898"/>
<dbReference type="PaxDb" id="224308-BSU01310"/>
<dbReference type="EnsemblBacteria" id="CAB11907">
    <property type="protein sequence ID" value="CAB11907"/>
    <property type="gene ID" value="BSU_01310"/>
</dbReference>
<dbReference type="GeneID" id="938229"/>
<dbReference type="KEGG" id="bsu:BSU01310"/>
<dbReference type="PATRIC" id="fig|224308.179.peg.134"/>
<dbReference type="eggNOG" id="COG0097">
    <property type="taxonomic scope" value="Bacteria"/>
</dbReference>
<dbReference type="InParanoid" id="P46898"/>
<dbReference type="OrthoDB" id="9805007at2"/>
<dbReference type="PhylomeDB" id="P46898"/>
<dbReference type="BioCyc" id="BSUB:BSU01310-MONOMER"/>
<dbReference type="EvolutionaryTrace" id="P46898"/>
<dbReference type="Proteomes" id="UP000001570">
    <property type="component" value="Chromosome"/>
</dbReference>
<dbReference type="GO" id="GO:0022625">
    <property type="term" value="C:cytosolic large ribosomal subunit"/>
    <property type="evidence" value="ECO:0000318"/>
    <property type="project" value="GO_Central"/>
</dbReference>
<dbReference type="GO" id="GO:0019843">
    <property type="term" value="F:rRNA binding"/>
    <property type="evidence" value="ECO:0007669"/>
    <property type="project" value="UniProtKB-UniRule"/>
</dbReference>
<dbReference type="GO" id="GO:0003735">
    <property type="term" value="F:structural constituent of ribosome"/>
    <property type="evidence" value="ECO:0000318"/>
    <property type="project" value="GO_Central"/>
</dbReference>
<dbReference type="GO" id="GO:0002181">
    <property type="term" value="P:cytoplasmic translation"/>
    <property type="evidence" value="ECO:0000318"/>
    <property type="project" value="GO_Central"/>
</dbReference>
<dbReference type="FunFam" id="3.90.930.12:FF:000001">
    <property type="entry name" value="50S ribosomal protein L6"/>
    <property type="match status" value="1"/>
</dbReference>
<dbReference type="FunFam" id="3.90.930.12:FF:000002">
    <property type="entry name" value="50S ribosomal protein L6"/>
    <property type="match status" value="1"/>
</dbReference>
<dbReference type="Gene3D" id="3.90.930.12">
    <property type="entry name" value="Ribosomal protein L6, alpha-beta domain"/>
    <property type="match status" value="2"/>
</dbReference>
<dbReference type="HAMAP" id="MF_01365_B">
    <property type="entry name" value="Ribosomal_uL6_B"/>
    <property type="match status" value="1"/>
</dbReference>
<dbReference type="InterPro" id="IPR000702">
    <property type="entry name" value="Ribosomal_uL6-like"/>
</dbReference>
<dbReference type="InterPro" id="IPR036789">
    <property type="entry name" value="Ribosomal_uL6-like_a/b-dom_sf"/>
</dbReference>
<dbReference type="InterPro" id="IPR020040">
    <property type="entry name" value="Ribosomal_uL6_a/b-dom"/>
</dbReference>
<dbReference type="InterPro" id="IPR019906">
    <property type="entry name" value="Ribosomal_uL6_bac-type"/>
</dbReference>
<dbReference type="InterPro" id="IPR002358">
    <property type="entry name" value="Ribosomal_uL6_CS"/>
</dbReference>
<dbReference type="NCBIfam" id="TIGR03654">
    <property type="entry name" value="L6_bact"/>
    <property type="match status" value="1"/>
</dbReference>
<dbReference type="PANTHER" id="PTHR11655">
    <property type="entry name" value="60S/50S RIBOSOMAL PROTEIN L6/L9"/>
    <property type="match status" value="1"/>
</dbReference>
<dbReference type="PANTHER" id="PTHR11655:SF14">
    <property type="entry name" value="LARGE RIBOSOMAL SUBUNIT PROTEIN UL6M"/>
    <property type="match status" value="1"/>
</dbReference>
<dbReference type="Pfam" id="PF00347">
    <property type="entry name" value="Ribosomal_L6"/>
    <property type="match status" value="2"/>
</dbReference>
<dbReference type="PIRSF" id="PIRSF002162">
    <property type="entry name" value="Ribosomal_L6"/>
    <property type="match status" value="1"/>
</dbReference>
<dbReference type="PRINTS" id="PR00059">
    <property type="entry name" value="RIBOSOMALL6"/>
</dbReference>
<dbReference type="SUPFAM" id="SSF56053">
    <property type="entry name" value="Ribosomal protein L6"/>
    <property type="match status" value="2"/>
</dbReference>
<dbReference type="PROSITE" id="PS00525">
    <property type="entry name" value="RIBOSOMAL_L6_1"/>
    <property type="match status" value="1"/>
</dbReference>
<proteinExistence type="evidence at protein level"/>
<keyword id="KW-0002">3D-structure</keyword>
<keyword id="KW-1185">Reference proteome</keyword>
<keyword id="KW-0687">Ribonucleoprotein</keyword>
<keyword id="KW-0689">Ribosomal protein</keyword>
<keyword id="KW-0694">RNA-binding</keyword>
<keyword id="KW-0699">rRNA-binding</keyword>
<comment type="function">
    <text evidence="2">This protein binds to the 23S rRNA, and is important in its secondary structure. It is located near the subunit interface in the base of the L7/L12 stalk, and near the tRNA binding site of the peptidyltransferase center.</text>
</comment>
<comment type="subunit">
    <text evidence="3">Part of the 50S ribosomal subunit.</text>
</comment>
<comment type="interaction">
    <interactant intactId="EBI-6401129">
        <id>P46898</id>
    </interactant>
    <interactant intactId="EBI-6401087">
        <id>P38424</id>
        <label>engB</label>
    </interactant>
    <organismsDiffer>false</organismsDiffer>
    <experiments>2</experiments>
</comment>
<comment type="similarity">
    <text evidence="2">Belongs to the universal ribosomal protein uL6 family.</text>
</comment>
<organism>
    <name type="scientific">Bacillus subtilis (strain 168)</name>
    <dbReference type="NCBI Taxonomy" id="224308"/>
    <lineage>
        <taxon>Bacteria</taxon>
        <taxon>Bacillati</taxon>
        <taxon>Bacillota</taxon>
        <taxon>Bacilli</taxon>
        <taxon>Bacillales</taxon>
        <taxon>Bacillaceae</taxon>
        <taxon>Bacillus</taxon>
    </lineage>
</organism>
<reference key="1">
    <citation type="journal article" date="1996" name="Gene">
        <title>Genetic and transcriptional organization of the Bacillus subtilis spc-alpha region.</title>
        <authorList>
            <person name="Suh J.-W."/>
            <person name="Boylan S.A."/>
            <person name="Oh S.H."/>
            <person name="Price C.W."/>
        </authorList>
    </citation>
    <scope>NUCLEOTIDE SEQUENCE [GENOMIC DNA]</scope>
    <source>
        <strain>168 / Marburg / ATCC 6051 / DSM 10 / JCM 1465 / NBRC 13719 / NCIMB 3610 / NRRL NRS-744 / VKM B-501</strain>
    </source>
</reference>
<reference key="2">
    <citation type="journal article" date="1996" name="Microbiology">
        <title>Sequence analysis of a 50 kb region between spo0H and rrnH on the Bacillus subtilis chromosome.</title>
        <authorList>
            <person name="Yasumoto K."/>
            <person name="Liu H."/>
            <person name="Jeong S.M."/>
            <person name="Ohashi Y."/>
            <person name="Kakinuma S."/>
            <person name="Tanaka K."/>
            <person name="Kawamura F."/>
            <person name="Yoshikawa H."/>
            <person name="Takahashi H."/>
        </authorList>
    </citation>
    <scope>NUCLEOTIDE SEQUENCE [GENOMIC DNA]</scope>
    <source>
        <strain>168</strain>
    </source>
</reference>
<reference key="3">
    <citation type="journal article" date="1997" name="Nature">
        <title>The complete genome sequence of the Gram-positive bacterium Bacillus subtilis.</title>
        <authorList>
            <person name="Kunst F."/>
            <person name="Ogasawara N."/>
            <person name="Moszer I."/>
            <person name="Albertini A.M."/>
            <person name="Alloni G."/>
            <person name="Azevedo V."/>
            <person name="Bertero M.G."/>
            <person name="Bessieres P."/>
            <person name="Bolotin A."/>
            <person name="Borchert S."/>
            <person name="Borriss R."/>
            <person name="Boursier L."/>
            <person name="Brans A."/>
            <person name="Braun M."/>
            <person name="Brignell S.C."/>
            <person name="Bron S."/>
            <person name="Brouillet S."/>
            <person name="Bruschi C.V."/>
            <person name="Caldwell B."/>
            <person name="Capuano V."/>
            <person name="Carter N.M."/>
            <person name="Choi S.-K."/>
            <person name="Codani J.-J."/>
            <person name="Connerton I.F."/>
            <person name="Cummings N.J."/>
            <person name="Daniel R.A."/>
            <person name="Denizot F."/>
            <person name="Devine K.M."/>
            <person name="Duesterhoeft A."/>
            <person name="Ehrlich S.D."/>
            <person name="Emmerson P.T."/>
            <person name="Entian K.-D."/>
            <person name="Errington J."/>
            <person name="Fabret C."/>
            <person name="Ferrari E."/>
            <person name="Foulger D."/>
            <person name="Fritz C."/>
            <person name="Fujita M."/>
            <person name="Fujita Y."/>
            <person name="Fuma S."/>
            <person name="Galizzi A."/>
            <person name="Galleron N."/>
            <person name="Ghim S.-Y."/>
            <person name="Glaser P."/>
            <person name="Goffeau A."/>
            <person name="Golightly E.J."/>
            <person name="Grandi G."/>
            <person name="Guiseppi G."/>
            <person name="Guy B.J."/>
            <person name="Haga K."/>
            <person name="Haiech J."/>
            <person name="Harwood C.R."/>
            <person name="Henaut A."/>
            <person name="Hilbert H."/>
            <person name="Holsappel S."/>
            <person name="Hosono S."/>
            <person name="Hullo M.-F."/>
            <person name="Itaya M."/>
            <person name="Jones L.-M."/>
            <person name="Joris B."/>
            <person name="Karamata D."/>
            <person name="Kasahara Y."/>
            <person name="Klaerr-Blanchard M."/>
            <person name="Klein C."/>
            <person name="Kobayashi Y."/>
            <person name="Koetter P."/>
            <person name="Koningstein G."/>
            <person name="Krogh S."/>
            <person name="Kumano M."/>
            <person name="Kurita K."/>
            <person name="Lapidus A."/>
            <person name="Lardinois S."/>
            <person name="Lauber J."/>
            <person name="Lazarevic V."/>
            <person name="Lee S.-M."/>
            <person name="Levine A."/>
            <person name="Liu H."/>
            <person name="Masuda S."/>
            <person name="Mauel C."/>
            <person name="Medigue C."/>
            <person name="Medina N."/>
            <person name="Mellado R.P."/>
            <person name="Mizuno M."/>
            <person name="Moestl D."/>
            <person name="Nakai S."/>
            <person name="Noback M."/>
            <person name="Noone D."/>
            <person name="O'Reilly M."/>
            <person name="Ogawa K."/>
            <person name="Ogiwara A."/>
            <person name="Oudega B."/>
            <person name="Park S.-H."/>
            <person name="Parro V."/>
            <person name="Pohl T.M."/>
            <person name="Portetelle D."/>
            <person name="Porwollik S."/>
            <person name="Prescott A.M."/>
            <person name="Presecan E."/>
            <person name="Pujic P."/>
            <person name="Purnelle B."/>
            <person name="Rapoport G."/>
            <person name="Rey M."/>
            <person name="Reynolds S."/>
            <person name="Rieger M."/>
            <person name="Rivolta C."/>
            <person name="Rocha E."/>
            <person name="Roche B."/>
            <person name="Rose M."/>
            <person name="Sadaie Y."/>
            <person name="Sato T."/>
            <person name="Scanlan E."/>
            <person name="Schleich S."/>
            <person name="Schroeter R."/>
            <person name="Scoffone F."/>
            <person name="Sekiguchi J."/>
            <person name="Sekowska A."/>
            <person name="Seror S.J."/>
            <person name="Serror P."/>
            <person name="Shin B.-S."/>
            <person name="Soldo B."/>
            <person name="Sorokin A."/>
            <person name="Tacconi E."/>
            <person name="Takagi T."/>
            <person name="Takahashi H."/>
            <person name="Takemaru K."/>
            <person name="Takeuchi M."/>
            <person name="Tamakoshi A."/>
            <person name="Tanaka T."/>
            <person name="Terpstra P."/>
            <person name="Tognoni A."/>
            <person name="Tosato V."/>
            <person name="Uchiyama S."/>
            <person name="Vandenbol M."/>
            <person name="Vannier F."/>
            <person name="Vassarotti A."/>
            <person name="Viari A."/>
            <person name="Wambutt R."/>
            <person name="Wedler E."/>
            <person name="Wedler H."/>
            <person name="Weitzenegger T."/>
            <person name="Winters P."/>
            <person name="Wipat A."/>
            <person name="Yamamoto H."/>
            <person name="Yamane K."/>
            <person name="Yasumoto K."/>
            <person name="Yata K."/>
            <person name="Yoshida K."/>
            <person name="Yoshikawa H.-F."/>
            <person name="Zumstein E."/>
            <person name="Yoshikawa H."/>
            <person name="Danchin A."/>
        </authorList>
    </citation>
    <scope>NUCLEOTIDE SEQUENCE [LARGE SCALE GENOMIC DNA]</scope>
    <source>
        <strain>168</strain>
    </source>
</reference>
<reference evidence="5 6" key="4">
    <citation type="journal article" date="2018" name="Proc. Natl. Acad. Sci. U.S.A.">
        <title>Structural basis for antibiotic resistance mediated by the Bacillus subtilis ABCF ATPase VmlR.</title>
        <authorList>
            <person name="Crowe-McAuliffe C."/>
            <person name="Graf M."/>
            <person name="Huter P."/>
            <person name="Takada H."/>
            <person name="Abdelshahid M."/>
            <person name="Novacek J."/>
            <person name="Murina V."/>
            <person name="Atkinson G.C."/>
            <person name="Hauryliuk V."/>
            <person name="Wilson D.N."/>
        </authorList>
    </citation>
    <scope>STRUCTURE BY ELECTRON MICROSCOPY (3.10 ANGSTROMS) OF 1-179 WITH AND WITHOUT VIRGINIAMYCIN M</scope>
</reference>
<name>RL6_BACSU</name>
<accession>P46898</accession>